<reference evidence="8" key="1">
    <citation type="journal article" date="2001" name="J. Biol. Chem.">
        <title>Structural and catalytic similarities between nucleotide pyrophosphatases/phosphodiesterases and alkaline phosphatases.</title>
        <authorList>
            <person name="Gijsbers R."/>
            <person name="Ceulemans H."/>
            <person name="Stalmans W."/>
            <person name="Bollen M."/>
        </authorList>
    </citation>
    <scope>NUCLEOTIDE SEQUENCE [MRNA]</scope>
    <source>
        <strain evidence="3">C57BL/6J</strain>
    </source>
</reference>
<reference key="2">
    <citation type="journal article" date="2009" name="PLoS Biol.">
        <title>Lineage-specific biology revealed by a finished genome assembly of the mouse.</title>
        <authorList>
            <person name="Church D.M."/>
            <person name="Goodstadt L."/>
            <person name="Hillier L.W."/>
            <person name="Zody M.C."/>
            <person name="Goldstein S."/>
            <person name="She X."/>
            <person name="Bult C.J."/>
            <person name="Agarwala R."/>
            <person name="Cherry J.L."/>
            <person name="DiCuccio M."/>
            <person name="Hlavina W."/>
            <person name="Kapustin Y."/>
            <person name="Meric P."/>
            <person name="Maglott D."/>
            <person name="Birtle Z."/>
            <person name="Marques A.C."/>
            <person name="Graves T."/>
            <person name="Zhou S."/>
            <person name="Teague B."/>
            <person name="Potamousis K."/>
            <person name="Churas C."/>
            <person name="Place M."/>
            <person name="Herschleb J."/>
            <person name="Runnheim R."/>
            <person name="Forrest D."/>
            <person name="Amos-Landgraf J."/>
            <person name="Schwartz D.C."/>
            <person name="Cheng Z."/>
            <person name="Lindblad-Toh K."/>
            <person name="Eichler E.E."/>
            <person name="Ponting C.P."/>
        </authorList>
    </citation>
    <scope>NUCLEOTIDE SEQUENCE [LARGE SCALE GENOMIC DNA]</scope>
    <source>
        <strain>C57BL/6J</strain>
    </source>
</reference>
<reference evidence="6" key="3">
    <citation type="journal article" date="2004" name="Genome Res.">
        <title>The status, quality, and expansion of the NIH full-length cDNA project: the Mammalian Gene Collection (MGC).</title>
        <authorList>
            <consortium name="The MGC Project Team"/>
        </authorList>
    </citation>
    <scope>NUCLEOTIDE SEQUENCE [LARGE SCALE MRNA]</scope>
    <source>
        <tissue>Brain</tissue>
    </source>
</reference>
<reference evidence="6" key="4">
    <citation type="journal article" date="2003" name="Biochem. Biophys. Res. Commun.">
        <title>Characterization of nucleotide pyrophosphatase-5 as an oligomannosidic glycoprotein in rat brain.</title>
        <authorList>
            <person name="Ohe Y."/>
            <person name="Ohnishi H."/>
            <person name="Okazawa H."/>
            <person name="Tomizawa K."/>
            <person name="Kobayashi H."/>
            <person name="Okawa K."/>
            <person name="Matozaki T."/>
        </authorList>
    </citation>
    <scope>TISSUE SPECIFICITY</scope>
</reference>
<reference key="5">
    <citation type="journal article" date="2010" name="Cell">
        <title>A tissue-specific atlas of mouse protein phosphorylation and expression.</title>
        <authorList>
            <person name="Huttlin E.L."/>
            <person name="Jedrychowski M.P."/>
            <person name="Elias J.E."/>
            <person name="Goswami T."/>
            <person name="Rad R."/>
            <person name="Beausoleil S.A."/>
            <person name="Villen J."/>
            <person name="Haas W."/>
            <person name="Sowa M.E."/>
            <person name="Gygi S.P."/>
        </authorList>
    </citation>
    <scope>IDENTIFICATION BY MASS SPECTROMETRY [LARGE SCALE ANALYSIS]</scope>
    <source>
        <tissue>Brain</tissue>
        <tissue>Kidney</tissue>
        <tissue>Lung</tissue>
    </source>
</reference>
<reference evidence="10 11" key="6">
    <citation type="journal article" date="2017" name="FEBS J.">
        <title>A key tyrosine substitution restricts nucleotide hydrolysis by the ectoenzyme NPP5.</title>
        <authorList>
            <person name="Gorelik A."/>
            <person name="Randriamihaja A."/>
            <person name="Illes K."/>
            <person name="Nagar B."/>
        </authorList>
    </citation>
    <scope>X-RAY CRYSTALLOGRAPHY (1.53 ANGSTROMS) OF 25-430 OF WILD-TYPE AND MUTANT ALA-72 IN COMPLEX WITH AMP</scope>
    <scope>FUNCTION</scope>
    <scope>MUTAGENESIS OF THR-72; TYR-73 AND GLU-159</scope>
    <scope>ACTIVE SITE</scope>
    <scope>METAL-BINDING SITES</scope>
    <scope>COFACTOR</scope>
</reference>
<comment type="function">
    <text evidence="1 5">Can hydrolyze NAD but cannot hydrolyze nucleotide di- and triphosphates (PubMed:28898552). Lacks lysopholipase D activity. May play a role in neuronal cell communication (By similarity).</text>
</comment>
<comment type="cofactor">
    <cofactor evidence="5">
        <name>Zn(2+)</name>
        <dbReference type="ChEBI" id="CHEBI:29105"/>
    </cofactor>
    <text evidence="5">Binds 2 Zn(2+) ions per subunit.</text>
</comment>
<comment type="subcellular location">
    <subcellularLocation>
        <location evidence="6">Secreted</location>
    </subcellularLocation>
    <subcellularLocation>
        <location evidence="6">Membrane</location>
        <topology evidence="6">Single-pass membrane protein</topology>
    </subcellularLocation>
</comment>
<comment type="tissue specificity">
    <text evidence="4">Expressed abundantly in the brain and kidney, and at lower levels in the liver.</text>
</comment>
<comment type="PTM">
    <text evidence="1">N-glycosylated.</text>
</comment>
<comment type="similarity">
    <text evidence="6">Belongs to the nucleotide pyrophosphatase/phosphodiesterase family.</text>
</comment>
<protein>
    <recommendedName>
        <fullName>Ectonucleotide pyrophosphatase/phosphodiesterase family member 5</fullName>
        <shortName>E-NPP 5</shortName>
        <shortName>NPP-5</shortName>
        <ecNumber>3.1.-.-</ecNumber>
    </recommendedName>
</protein>
<keyword id="KW-0002">3D-structure</keyword>
<keyword id="KW-0325">Glycoprotein</keyword>
<keyword id="KW-0378">Hydrolase</keyword>
<keyword id="KW-0472">Membrane</keyword>
<keyword id="KW-0479">Metal-binding</keyword>
<keyword id="KW-1185">Reference proteome</keyword>
<keyword id="KW-0964">Secreted</keyword>
<keyword id="KW-0732">Signal</keyword>
<keyword id="KW-0812">Transmembrane</keyword>
<keyword id="KW-1133">Transmembrane helix</keyword>
<keyword id="KW-0862">Zinc</keyword>
<gene>
    <name evidence="9" type="primary">Enpp5</name>
</gene>
<proteinExistence type="evidence at protein level"/>
<sequence length="477" mass="54387">MIPEFLLASCTLATLCHSAPFSLQPEEQKVLVVSFDGFRWDYLYKVPTPHFHYIMKNGVHVNQVTNVFITKTYPNHYTLVTGLFAENHGIVANDMFDPILNKSFSLEHMDIYDSKFWEEATPIWITNQRAGHASGAAMWPGADVKIHDSFPTYYLPYNESVSFEDRVAKIIEWFTAKDPINLGFLYWEEPDDTGHDVGPDSPLMGSVISDVDHKLGYLIKMLKRAKLWNNVNLIVTSDHGMTQCSKQRVIELDRYLDKEHYTLIDHSPVAAILPKEGKFDEVYDALAGAHPNLTVYKKEEIPERWHYKHNDRVQPIVAVADEGWYILQNKSDDFLLGNHGYDNALAEMHPIFLAHGPAFRKNFTKEAMNSTDLYSLLCHLLNLTALPHNGSFWNVQDLLSSATPKPIPYTQSTTLLLGSDKPGEDEQEESYPYYIGVSLGSIIAMVFFVVLIKHLIRSQVHTLQYRQVEVAQPLLQA</sequence>
<accession>Q9EQG7</accession>
<accession>A9C479</accession>
<accession>Q921P7</accession>
<organism>
    <name type="scientific">Mus musculus</name>
    <name type="common">Mouse</name>
    <dbReference type="NCBI Taxonomy" id="10090"/>
    <lineage>
        <taxon>Eukaryota</taxon>
        <taxon>Metazoa</taxon>
        <taxon>Chordata</taxon>
        <taxon>Craniata</taxon>
        <taxon>Vertebrata</taxon>
        <taxon>Euteleostomi</taxon>
        <taxon>Mammalia</taxon>
        <taxon>Eutheria</taxon>
        <taxon>Euarchontoglires</taxon>
        <taxon>Glires</taxon>
        <taxon>Rodentia</taxon>
        <taxon>Myomorpha</taxon>
        <taxon>Muroidea</taxon>
        <taxon>Muridae</taxon>
        <taxon>Murinae</taxon>
        <taxon>Mus</taxon>
        <taxon>Mus</taxon>
    </lineage>
</organism>
<dbReference type="EC" id="3.1.-.-"/>
<dbReference type="EMBL" id="AF233377">
    <property type="protein sequence ID" value="AAG49143.1"/>
    <property type="molecule type" value="mRNA"/>
</dbReference>
<dbReference type="EMBL" id="CT030230">
    <property type="status" value="NOT_ANNOTATED_CDS"/>
    <property type="molecule type" value="Genomic_DNA"/>
</dbReference>
<dbReference type="EMBL" id="BC138977">
    <property type="protein sequence ID" value="AAI38978.1"/>
    <property type="molecule type" value="mRNA"/>
</dbReference>
<dbReference type="EMBL" id="BC138978">
    <property type="protein sequence ID" value="AAI38979.1"/>
    <property type="molecule type" value="mRNA"/>
</dbReference>
<dbReference type="CCDS" id="CCDS28802.1"/>
<dbReference type="PIR" id="A59390">
    <property type="entry name" value="A59390"/>
</dbReference>
<dbReference type="RefSeq" id="NP_001162091.1">
    <property type="nucleotide sequence ID" value="NM_001168620.2"/>
</dbReference>
<dbReference type="RefSeq" id="NP_001316548.1">
    <property type="nucleotide sequence ID" value="NM_001329619.1"/>
</dbReference>
<dbReference type="RefSeq" id="NP_114392.1">
    <property type="nucleotide sequence ID" value="NM_032003.3"/>
</dbReference>
<dbReference type="PDB" id="5VEN">
    <property type="method" value="X-ray"/>
    <property type="resolution" value="1.69 A"/>
    <property type="chains" value="A/B=25-430"/>
</dbReference>
<dbReference type="PDB" id="5VEO">
    <property type="method" value="X-ray"/>
    <property type="resolution" value="1.53 A"/>
    <property type="chains" value="A=25-430"/>
</dbReference>
<dbReference type="PDBsum" id="5VEN"/>
<dbReference type="PDBsum" id="5VEO"/>
<dbReference type="SMR" id="Q9EQG7"/>
<dbReference type="FunCoup" id="Q9EQG7">
    <property type="interactions" value="464"/>
</dbReference>
<dbReference type="STRING" id="10090.ENSMUSP00000024756"/>
<dbReference type="GlyConnect" id="2276">
    <property type="glycosylation" value="6 N-Linked glycans (5 sites)"/>
</dbReference>
<dbReference type="GlyCosmos" id="Q9EQG7">
    <property type="glycosylation" value="8 sites, 6 glycans"/>
</dbReference>
<dbReference type="GlyGen" id="Q9EQG7">
    <property type="glycosylation" value="9 sites, 6 N-linked glycans (5 sites)"/>
</dbReference>
<dbReference type="iPTMnet" id="Q9EQG7"/>
<dbReference type="PhosphoSitePlus" id="Q9EQG7"/>
<dbReference type="PaxDb" id="10090-ENSMUSP00000024756"/>
<dbReference type="ProteomicsDB" id="277877"/>
<dbReference type="Pumba" id="Q9EQG7"/>
<dbReference type="Antibodypedia" id="2350">
    <property type="antibodies" value="157 antibodies from 24 providers"/>
</dbReference>
<dbReference type="DNASU" id="83965"/>
<dbReference type="Ensembl" id="ENSMUST00000024756.5">
    <property type="protein sequence ID" value="ENSMUSP00000024756.5"/>
    <property type="gene ID" value="ENSMUSG00000023960.14"/>
</dbReference>
<dbReference type="Ensembl" id="ENSMUST00000154166.8">
    <property type="protein sequence ID" value="ENSMUSP00000122767.2"/>
    <property type="gene ID" value="ENSMUSG00000023960.14"/>
</dbReference>
<dbReference type="GeneID" id="83965"/>
<dbReference type="KEGG" id="mmu:83965"/>
<dbReference type="UCSC" id="uc008cpr.2">
    <property type="organism name" value="mouse"/>
</dbReference>
<dbReference type="AGR" id="MGI:1933830"/>
<dbReference type="CTD" id="59084"/>
<dbReference type="MGI" id="MGI:1933830">
    <property type="gene designation" value="Enpp5"/>
</dbReference>
<dbReference type="VEuPathDB" id="HostDB:ENSMUSG00000023960"/>
<dbReference type="eggNOG" id="KOG2645">
    <property type="taxonomic scope" value="Eukaryota"/>
</dbReference>
<dbReference type="GeneTree" id="ENSGT00940000160562"/>
<dbReference type="HOGENOM" id="CLU_017594_1_2_1"/>
<dbReference type="InParanoid" id="Q9EQG7"/>
<dbReference type="OMA" id="DEYVSRD"/>
<dbReference type="OrthoDB" id="415411at2759"/>
<dbReference type="PhylomeDB" id="Q9EQG7"/>
<dbReference type="TreeFam" id="TF330032"/>
<dbReference type="BRENDA" id="3.6.1.9">
    <property type="organism ID" value="3474"/>
</dbReference>
<dbReference type="BioGRID-ORCS" id="83965">
    <property type="hits" value="4 hits in 75 CRISPR screens"/>
</dbReference>
<dbReference type="ChiTaRS" id="Enpp5">
    <property type="organism name" value="mouse"/>
</dbReference>
<dbReference type="PRO" id="PR:Q9EQG7"/>
<dbReference type="Proteomes" id="UP000000589">
    <property type="component" value="Chromosome 17"/>
</dbReference>
<dbReference type="RNAct" id="Q9EQG7">
    <property type="molecule type" value="protein"/>
</dbReference>
<dbReference type="Bgee" id="ENSMUSG00000023960">
    <property type="expression patterns" value="Expressed in seminal vesicle and 212 other cell types or tissues"/>
</dbReference>
<dbReference type="ExpressionAtlas" id="Q9EQG7">
    <property type="expression patterns" value="baseline and differential"/>
</dbReference>
<dbReference type="GO" id="GO:0005576">
    <property type="term" value="C:extracellular region"/>
    <property type="evidence" value="ECO:0007669"/>
    <property type="project" value="UniProtKB-SubCell"/>
</dbReference>
<dbReference type="GO" id="GO:0005886">
    <property type="term" value="C:plasma membrane"/>
    <property type="evidence" value="ECO:0000247"/>
    <property type="project" value="MGI"/>
</dbReference>
<dbReference type="GO" id="GO:0004551">
    <property type="term" value="F:dinucleotide phosphatase activity"/>
    <property type="evidence" value="ECO:0000247"/>
    <property type="project" value="MGI"/>
</dbReference>
<dbReference type="GO" id="GO:0000210">
    <property type="term" value="F:NAD+ diphosphatase activity"/>
    <property type="evidence" value="ECO:0007669"/>
    <property type="project" value="Ensembl"/>
</dbReference>
<dbReference type="GO" id="GO:0008270">
    <property type="term" value="F:zinc ion binding"/>
    <property type="evidence" value="ECO:0000314"/>
    <property type="project" value="UniProtKB"/>
</dbReference>
<dbReference type="GO" id="GO:0007154">
    <property type="term" value="P:cell communication"/>
    <property type="evidence" value="ECO:0007669"/>
    <property type="project" value="Ensembl"/>
</dbReference>
<dbReference type="GO" id="GO:0009166">
    <property type="term" value="P:nucleotide catabolic process"/>
    <property type="evidence" value="ECO:0000247"/>
    <property type="project" value="MGI"/>
</dbReference>
<dbReference type="CDD" id="cd16018">
    <property type="entry name" value="Enpp"/>
    <property type="match status" value="1"/>
</dbReference>
<dbReference type="FunFam" id="3.30.1360.180:FF:000004">
    <property type="entry name" value="Ectonucleotide pyrophosphatase/phosphodiesterase family member 4"/>
    <property type="match status" value="1"/>
</dbReference>
<dbReference type="Gene3D" id="3.30.1360.180">
    <property type="match status" value="1"/>
</dbReference>
<dbReference type="Gene3D" id="3.40.720.10">
    <property type="entry name" value="Alkaline Phosphatase, subunit A"/>
    <property type="match status" value="1"/>
</dbReference>
<dbReference type="InterPro" id="IPR017850">
    <property type="entry name" value="Alkaline_phosphatase_core_sf"/>
</dbReference>
<dbReference type="InterPro" id="IPR002591">
    <property type="entry name" value="Phosphodiest/P_Trfase"/>
</dbReference>
<dbReference type="PANTHER" id="PTHR10151">
    <property type="entry name" value="ECTONUCLEOTIDE PYROPHOSPHATASE/PHOSPHODIESTERASE"/>
    <property type="match status" value="1"/>
</dbReference>
<dbReference type="PANTHER" id="PTHR10151:SF125">
    <property type="entry name" value="ECTONUCLEOTIDE PYROPHOSPHATASE_PHOSPHODIESTERASE FAMILY MEMBER 5"/>
    <property type="match status" value="1"/>
</dbReference>
<dbReference type="Pfam" id="PF01663">
    <property type="entry name" value="Phosphodiest"/>
    <property type="match status" value="1"/>
</dbReference>
<dbReference type="SUPFAM" id="SSF53649">
    <property type="entry name" value="Alkaline phosphatase-like"/>
    <property type="match status" value="1"/>
</dbReference>
<evidence type="ECO:0000250" key="1">
    <source>
        <dbReference type="UniProtKB" id="P84039"/>
    </source>
</evidence>
<evidence type="ECO:0000255" key="2"/>
<evidence type="ECO:0000269" key="3">
    <source>
    </source>
</evidence>
<evidence type="ECO:0000269" key="4">
    <source>
    </source>
</evidence>
<evidence type="ECO:0000269" key="5">
    <source>
    </source>
</evidence>
<evidence type="ECO:0000305" key="6"/>
<evidence type="ECO:0000305" key="7">
    <source>
    </source>
</evidence>
<evidence type="ECO:0000312" key="8">
    <source>
        <dbReference type="EMBL" id="AAG49143.1"/>
    </source>
</evidence>
<evidence type="ECO:0000312" key="9">
    <source>
        <dbReference type="MGI" id="MGI:1933830"/>
    </source>
</evidence>
<evidence type="ECO:0007744" key="10">
    <source>
        <dbReference type="PDB" id="5VEN"/>
    </source>
</evidence>
<evidence type="ECO:0007744" key="11">
    <source>
        <dbReference type="PDB" id="5VEO"/>
    </source>
</evidence>
<evidence type="ECO:0007829" key="12">
    <source>
        <dbReference type="PDB" id="5VEO"/>
    </source>
</evidence>
<name>ENPP5_MOUSE</name>
<feature type="signal peptide" evidence="1">
    <location>
        <begin position="1"/>
        <end position="24"/>
    </location>
</feature>
<feature type="chain" id="PRO_0000036402" description="Ectonucleotide pyrophosphatase/phosphodiesterase family member 5">
    <location>
        <begin position="25"/>
        <end position="477"/>
    </location>
</feature>
<feature type="transmembrane region" description="Helical" evidence="2">
    <location>
        <begin position="432"/>
        <end position="452"/>
    </location>
</feature>
<feature type="active site" description="Nucleophile" evidence="2 5 10 11">
    <location>
        <position position="72"/>
    </location>
</feature>
<feature type="binding site" evidence="5 10 11">
    <location>
        <position position="36"/>
    </location>
    <ligand>
        <name>Zn(2+)</name>
        <dbReference type="ChEBI" id="CHEBI:29105"/>
        <label>1</label>
        <note>catalytic</note>
    </ligand>
</feature>
<feature type="binding site" evidence="5 10 11">
    <location>
        <position position="72"/>
    </location>
    <ligand>
        <name>Zn(2+)</name>
        <dbReference type="ChEBI" id="CHEBI:29105"/>
        <label>1</label>
        <note>catalytic</note>
    </ligand>
</feature>
<feature type="binding site" evidence="5 10 11">
    <location>
        <position position="191"/>
    </location>
    <ligand>
        <name>Zn(2+)</name>
        <dbReference type="ChEBI" id="CHEBI:29105"/>
        <label>2</label>
        <note>catalytic</note>
    </ligand>
</feature>
<feature type="binding site" evidence="5 10 11">
    <location>
        <position position="195"/>
    </location>
    <ligand>
        <name>Zn(2+)</name>
        <dbReference type="ChEBI" id="CHEBI:29105"/>
        <label>2</label>
        <note>catalytic</note>
    </ligand>
</feature>
<feature type="binding site" evidence="5 10 11">
    <location>
        <position position="238"/>
    </location>
    <ligand>
        <name>Zn(2+)</name>
        <dbReference type="ChEBI" id="CHEBI:29105"/>
        <label>1</label>
        <note>catalytic</note>
    </ligand>
</feature>
<feature type="binding site" evidence="5 10 11">
    <location>
        <position position="239"/>
    </location>
    <ligand>
        <name>Zn(2+)</name>
        <dbReference type="ChEBI" id="CHEBI:29105"/>
        <label>1</label>
        <note>catalytic</note>
    </ligand>
</feature>
<feature type="binding site" evidence="5 10 11">
    <location>
        <position position="339"/>
    </location>
    <ligand>
        <name>Zn(2+)</name>
        <dbReference type="ChEBI" id="CHEBI:29105"/>
        <label>2</label>
        <note>catalytic</note>
    </ligand>
</feature>
<feature type="glycosylation site" description="N-linked (GlcNAc...) asparagine" evidence="2">
    <location>
        <position position="101"/>
    </location>
</feature>
<feature type="glycosylation site" description="N-linked (GlcNAc...) asparagine" evidence="2">
    <location>
        <position position="158"/>
    </location>
</feature>
<feature type="glycosylation site" description="N-linked (GlcNAc...) asparagine" evidence="2">
    <location>
        <position position="292"/>
    </location>
</feature>
<feature type="glycosylation site" description="N-linked (GlcNAc...) asparagine" evidence="2">
    <location>
        <position position="329"/>
    </location>
</feature>
<feature type="glycosylation site" description="N-linked (GlcNAc...) asparagine" evidence="2">
    <location>
        <position position="362"/>
    </location>
</feature>
<feature type="glycosylation site" description="N-linked (GlcNAc...) asparagine" evidence="2">
    <location>
        <position position="369"/>
    </location>
</feature>
<feature type="glycosylation site" description="N-linked (GlcNAc...) asparagine" evidence="2">
    <location>
        <position position="382"/>
    </location>
</feature>
<feature type="glycosylation site" description="N-linked (GlcNAc...) asparagine" evidence="2">
    <location>
        <position position="389"/>
    </location>
</feature>
<feature type="mutagenesis site" description="Catalytically inactive." evidence="7">
    <original>T</original>
    <variation>A</variation>
    <location>
        <position position="72"/>
    </location>
</feature>
<feature type="mutagenesis site" description="Can hydrolyze nucleotides, with about fourfold higher rates for adenine versus uridine and no strong preference for diphosphates or triphosphates." evidence="5">
    <original>Y</original>
    <variation>F</variation>
    <location>
        <position position="73"/>
    </location>
</feature>
<feature type="mutagenesis site" description="No effect on its ability to hydrolyze NAD." evidence="5">
    <original>E</original>
    <variation>S</variation>
    <location>
        <position position="159"/>
    </location>
</feature>
<feature type="strand" evidence="12">
    <location>
        <begin position="30"/>
        <end position="35"/>
    </location>
</feature>
<feature type="helix" evidence="12">
    <location>
        <begin position="40"/>
        <end position="44"/>
    </location>
</feature>
<feature type="helix" evidence="12">
    <location>
        <begin position="49"/>
        <end position="56"/>
    </location>
</feature>
<feature type="strand" evidence="12">
    <location>
        <begin position="58"/>
        <end position="65"/>
    </location>
</feature>
<feature type="helix" evidence="12">
    <location>
        <begin position="72"/>
        <end position="81"/>
    </location>
</feature>
<feature type="helix" evidence="12">
    <location>
        <begin position="85"/>
        <end position="88"/>
    </location>
</feature>
<feature type="strand" evidence="12">
    <location>
        <begin position="93"/>
        <end position="97"/>
    </location>
</feature>
<feature type="turn" evidence="12">
    <location>
        <begin position="98"/>
        <end position="101"/>
    </location>
</feature>
<feature type="strand" evidence="12">
    <location>
        <begin position="102"/>
        <end position="105"/>
    </location>
</feature>
<feature type="helix" evidence="12">
    <location>
        <begin position="106"/>
        <end position="108"/>
    </location>
</feature>
<feature type="helix" evidence="12">
    <location>
        <begin position="114"/>
        <end position="116"/>
    </location>
</feature>
<feature type="turn" evidence="12">
    <location>
        <begin position="117"/>
        <end position="119"/>
    </location>
</feature>
<feature type="helix" evidence="12">
    <location>
        <begin position="123"/>
        <end position="129"/>
    </location>
</feature>
<feature type="strand" evidence="12">
    <location>
        <begin position="134"/>
        <end position="138"/>
    </location>
</feature>
<feature type="turn" evidence="12">
    <location>
        <begin position="140"/>
        <end position="143"/>
    </location>
</feature>
<feature type="strand" evidence="12">
    <location>
        <begin position="152"/>
        <end position="154"/>
    </location>
</feature>
<feature type="helix" evidence="12">
    <location>
        <begin position="163"/>
        <end position="174"/>
    </location>
</feature>
<feature type="strand" evidence="12">
    <location>
        <begin position="176"/>
        <end position="178"/>
    </location>
</feature>
<feature type="strand" evidence="12">
    <location>
        <begin position="181"/>
        <end position="187"/>
    </location>
</feature>
<feature type="helix" evidence="12">
    <location>
        <begin position="191"/>
        <end position="197"/>
    </location>
</feature>
<feature type="helix" evidence="12">
    <location>
        <begin position="204"/>
        <end position="224"/>
    </location>
</feature>
<feature type="turn" evidence="12">
    <location>
        <begin position="228"/>
        <end position="230"/>
    </location>
</feature>
<feature type="strand" evidence="12">
    <location>
        <begin position="231"/>
        <end position="236"/>
    </location>
</feature>
<feature type="strand" evidence="12">
    <location>
        <begin position="248"/>
        <end position="251"/>
    </location>
</feature>
<feature type="helix" evidence="12">
    <location>
        <begin position="252"/>
        <end position="254"/>
    </location>
</feature>
<feature type="helix" evidence="12">
    <location>
        <begin position="258"/>
        <end position="260"/>
    </location>
</feature>
<feature type="strand" evidence="12">
    <location>
        <begin position="261"/>
        <end position="265"/>
    </location>
</feature>
<feature type="strand" evidence="12">
    <location>
        <begin position="267"/>
        <end position="274"/>
    </location>
</feature>
<feature type="helix" evidence="12">
    <location>
        <begin position="279"/>
        <end position="286"/>
    </location>
</feature>
<feature type="turn" evidence="12">
    <location>
        <begin position="287"/>
        <end position="289"/>
    </location>
</feature>
<feature type="strand" evidence="12">
    <location>
        <begin position="293"/>
        <end position="297"/>
    </location>
</feature>
<feature type="helix" evidence="12">
    <location>
        <begin position="298"/>
        <end position="300"/>
    </location>
</feature>
<feature type="helix" evidence="12">
    <location>
        <begin position="303"/>
        <end position="305"/>
    </location>
</feature>
<feature type="strand" evidence="12">
    <location>
        <begin position="308"/>
        <end position="310"/>
    </location>
</feature>
<feature type="strand" evidence="12">
    <location>
        <begin position="315"/>
        <end position="320"/>
    </location>
</feature>
<feature type="strand" evidence="12">
    <location>
        <begin position="325"/>
        <end position="329"/>
    </location>
</feature>
<feature type="strand" evidence="12">
    <location>
        <begin position="336"/>
        <end position="338"/>
    </location>
</feature>
<feature type="helix" evidence="12">
    <location>
        <begin position="346"/>
        <end position="348"/>
    </location>
</feature>
<feature type="strand" evidence="12">
    <location>
        <begin position="352"/>
        <end position="356"/>
    </location>
</feature>
<feature type="strand" evidence="12">
    <location>
        <begin position="361"/>
        <end position="369"/>
    </location>
</feature>
<feature type="helix" evidence="12">
    <location>
        <begin position="370"/>
        <end position="372"/>
    </location>
</feature>
<feature type="helix" evidence="12">
    <location>
        <begin position="373"/>
        <end position="380"/>
    </location>
</feature>
<feature type="helix" evidence="12">
    <location>
        <begin position="392"/>
        <end position="395"/>
    </location>
</feature>
<feature type="helix" evidence="12">
    <location>
        <begin position="396"/>
        <end position="398"/>
    </location>
</feature>